<keyword id="KW-0067">ATP-binding</keyword>
<keyword id="KW-0227">DNA damage</keyword>
<keyword id="KW-0234">DNA repair</keyword>
<keyword id="KW-0238">DNA-binding</keyword>
<keyword id="KW-0547">Nucleotide-binding</keyword>
<keyword id="KW-0539">Nucleus</keyword>
<keyword id="KW-1185">Reference proteome</keyword>
<evidence type="ECO:0000255" key="1"/>
<evidence type="ECO:0000269" key="2">
    <source>
    </source>
</evidence>
<evidence type="ECO:0000269" key="3">
    <source>
    </source>
</evidence>
<evidence type="ECO:0000269" key="4">
    <source>
    </source>
</evidence>
<evidence type="ECO:0000269" key="5">
    <source>
    </source>
</evidence>
<evidence type="ECO:0000269" key="6">
    <source>
    </source>
</evidence>
<evidence type="ECO:0000269" key="7">
    <source>
    </source>
</evidence>
<evidence type="ECO:0000269" key="8">
    <source>
    </source>
</evidence>
<evidence type="ECO:0000269" key="9">
    <source>
    </source>
</evidence>
<evidence type="ECO:0000269" key="10">
    <source>
    </source>
</evidence>
<evidence type="ECO:0000269" key="11">
    <source>
    </source>
</evidence>
<evidence type="ECO:0000269" key="12">
    <source>
    </source>
</evidence>
<evidence type="ECO:0000269" key="13">
    <source>
    </source>
</evidence>
<evidence type="ECO:0000269" key="14">
    <source>
    </source>
</evidence>
<evidence type="ECO:0000269" key="15">
    <source>
    </source>
</evidence>
<evidence type="ECO:0000269" key="16">
    <source>
    </source>
</evidence>
<evidence type="ECO:0000269" key="17">
    <source>
    </source>
</evidence>
<evidence type="ECO:0000269" key="18">
    <source>
    </source>
</evidence>
<evidence type="ECO:0000269" key="19">
    <source>
    </source>
</evidence>
<evidence type="ECO:0000269" key="20">
    <source>
    </source>
</evidence>
<evidence type="ECO:0000269" key="21">
    <source>
    </source>
</evidence>
<evidence type="ECO:0000269" key="22">
    <source>
    </source>
</evidence>
<evidence type="ECO:0000269" key="23">
    <source>
    </source>
</evidence>
<evidence type="ECO:0000269" key="24">
    <source>
    </source>
</evidence>
<evidence type="ECO:0000269" key="25">
    <source>
    </source>
</evidence>
<evidence type="ECO:0000269" key="26">
    <source>
    </source>
</evidence>
<evidence type="ECO:0000269" key="27">
    <source>
    </source>
</evidence>
<evidence type="ECO:0000269" key="28">
    <source>
    </source>
</evidence>
<evidence type="ECO:0000269" key="29">
    <source>
    </source>
</evidence>
<evidence type="ECO:0000269" key="30">
    <source>
    </source>
</evidence>
<evidence type="ECO:0000269" key="31">
    <source>
    </source>
</evidence>
<evidence type="ECO:0000269" key="32">
    <source>
    </source>
</evidence>
<evidence type="ECO:0000269" key="33">
    <source>
    </source>
</evidence>
<evidence type="ECO:0000269" key="34">
    <source>
    </source>
</evidence>
<evidence type="ECO:0000269" key="35">
    <source>
    </source>
</evidence>
<evidence type="ECO:0000269" key="36">
    <source>
    </source>
</evidence>
<evidence type="ECO:0000305" key="37"/>
<gene>
    <name type="primary">MSH2</name>
    <name type="ordered locus">YOL090W</name>
    <name type="ORF">O0935</name>
</gene>
<reference key="1">
    <citation type="journal article" date="1992" name="Genetics">
        <title>Isolation and characterization of two Saccharomyces cerevisiae genes encoding homologs of the bacterial HexA and MutS mismatch repair proteins.</title>
        <authorList>
            <person name="Reenan R.A.G."/>
            <person name="Kolodner R.D."/>
        </authorList>
    </citation>
    <scope>NUCLEOTIDE SEQUENCE [GENOMIC DNA]</scope>
</reference>
<reference key="2">
    <citation type="journal article" date="1995" name="Yeast">
        <title>A 29.425 kb segment on the left arm of yeast chromosome XV contains more than twice as many unknown as known open reading frames.</title>
        <authorList>
            <person name="Zumstein E."/>
            <person name="Pearson B.M."/>
            <person name="Kalogeropoulos A."/>
            <person name="Schweizer M."/>
        </authorList>
    </citation>
    <scope>NUCLEOTIDE SEQUENCE [GENOMIC DNA]</scope>
    <source>
        <strain>ATCC 96604 / S288c / FY1679</strain>
    </source>
</reference>
<reference key="3">
    <citation type="journal article" date="1997" name="Nature">
        <title>The nucleotide sequence of Saccharomyces cerevisiae chromosome XV.</title>
        <authorList>
            <person name="Dujon B."/>
            <person name="Albermann K."/>
            <person name="Aldea M."/>
            <person name="Alexandraki D."/>
            <person name="Ansorge W."/>
            <person name="Arino J."/>
            <person name="Benes V."/>
            <person name="Bohn C."/>
            <person name="Bolotin-Fukuhara M."/>
            <person name="Bordonne R."/>
            <person name="Boyer J."/>
            <person name="Camasses A."/>
            <person name="Casamayor A."/>
            <person name="Casas C."/>
            <person name="Cheret G."/>
            <person name="Cziepluch C."/>
            <person name="Daignan-Fornier B."/>
            <person name="Dang V.-D."/>
            <person name="de Haan M."/>
            <person name="Delius H."/>
            <person name="Durand P."/>
            <person name="Fairhead C."/>
            <person name="Feldmann H."/>
            <person name="Gaillon L."/>
            <person name="Galisson F."/>
            <person name="Gamo F.-J."/>
            <person name="Gancedo C."/>
            <person name="Goffeau A."/>
            <person name="Goulding S.E."/>
            <person name="Grivell L.A."/>
            <person name="Habbig B."/>
            <person name="Hand N.J."/>
            <person name="Hani J."/>
            <person name="Hattenhorst U."/>
            <person name="Hebling U."/>
            <person name="Hernando Y."/>
            <person name="Herrero E."/>
            <person name="Heumann K."/>
            <person name="Hiesel R."/>
            <person name="Hilger F."/>
            <person name="Hofmann B."/>
            <person name="Hollenberg C.P."/>
            <person name="Hughes B."/>
            <person name="Jauniaux J.-C."/>
            <person name="Kalogeropoulos A."/>
            <person name="Katsoulou C."/>
            <person name="Kordes E."/>
            <person name="Lafuente M.J."/>
            <person name="Landt O."/>
            <person name="Louis E.J."/>
            <person name="Maarse A.C."/>
            <person name="Madania A."/>
            <person name="Mannhaupt G."/>
            <person name="Marck C."/>
            <person name="Martin R.P."/>
            <person name="Mewes H.-W."/>
            <person name="Michaux G."/>
            <person name="Paces V."/>
            <person name="Parle-McDermott A.G."/>
            <person name="Pearson B.M."/>
            <person name="Perrin A."/>
            <person name="Pettersson B."/>
            <person name="Poch O."/>
            <person name="Pohl T.M."/>
            <person name="Poirey R."/>
            <person name="Portetelle D."/>
            <person name="Pujol A."/>
            <person name="Purnelle B."/>
            <person name="Ramezani Rad M."/>
            <person name="Rechmann S."/>
            <person name="Schwager C."/>
            <person name="Schweizer M."/>
            <person name="Sor F."/>
            <person name="Sterky F."/>
            <person name="Tarassov I.A."/>
            <person name="Teodoru C."/>
            <person name="Tettelin H."/>
            <person name="Thierry A."/>
            <person name="Tobiasch E."/>
            <person name="Tzermia M."/>
            <person name="Uhlen M."/>
            <person name="Unseld M."/>
            <person name="Valens M."/>
            <person name="Vandenbol M."/>
            <person name="Vetter I."/>
            <person name="Vlcek C."/>
            <person name="Voet M."/>
            <person name="Volckaert G."/>
            <person name="Voss H."/>
            <person name="Wambutt R."/>
            <person name="Wedler H."/>
            <person name="Wiemann S."/>
            <person name="Winsor B."/>
            <person name="Wolfe K.H."/>
            <person name="Zollner A."/>
            <person name="Zumstein E."/>
            <person name="Kleine K."/>
        </authorList>
    </citation>
    <scope>NUCLEOTIDE SEQUENCE [LARGE SCALE GENOMIC DNA]</scope>
    <source>
        <strain>ATCC 204508 / S288c</strain>
    </source>
</reference>
<reference key="4">
    <citation type="journal article" date="2014" name="G3 (Bethesda)">
        <title>The reference genome sequence of Saccharomyces cerevisiae: Then and now.</title>
        <authorList>
            <person name="Engel S.R."/>
            <person name="Dietrich F.S."/>
            <person name="Fisk D.G."/>
            <person name="Binkley G."/>
            <person name="Balakrishnan R."/>
            <person name="Costanzo M.C."/>
            <person name="Dwight S.S."/>
            <person name="Hitz B.C."/>
            <person name="Karra K."/>
            <person name="Nash R.S."/>
            <person name="Weng S."/>
            <person name="Wong E.D."/>
            <person name="Lloyd P."/>
            <person name="Skrzypek M.S."/>
            <person name="Miyasato S.R."/>
            <person name="Simison M."/>
            <person name="Cherry J.M."/>
        </authorList>
    </citation>
    <scope>GENOME REANNOTATION</scope>
    <source>
        <strain>ATCC 204508 / S288c</strain>
    </source>
</reference>
<reference key="5">
    <citation type="journal article" date="1992" name="Genetics">
        <title>Characterization of insertion mutations in the Saccharomyces cerevisiae MSH1 and MSH2 genes: evidence for separate mitochondrial and nuclear functions.</title>
        <authorList>
            <person name="Reenan R.A.G."/>
            <person name="Kolodner R.D."/>
        </authorList>
    </citation>
    <scope>CHARACTERIZATION</scope>
</reference>
<reference key="6">
    <citation type="journal article" date="1994" name="Science">
        <title>MLH1, PMS1, and MSH2 interactions during the initiation of DNA mismatch repair in yeast.</title>
        <authorList>
            <person name="Prolla T.A."/>
            <person name="Pang Q."/>
            <person name="Alani E."/>
            <person name="Kolodner R.D."/>
            <person name="Liskay R.M."/>
        </authorList>
    </citation>
    <scope>COMPLEX FORMATION WITH MLH1-PMS1</scope>
</reference>
<reference key="7">
    <citation type="journal article" date="1996" name="Cell">
        <title>Requirement for PCNA in DNA mismatch repair at a step preceding DNA resynthesis.</title>
        <authorList>
            <person name="Umar A."/>
            <person name="Buermeyer A.B."/>
            <person name="Simon J.A."/>
            <person name="Thomas D.C."/>
            <person name="Clark A.B."/>
            <person name="Liskay R.M."/>
            <person name="Kunkel T.A."/>
        </authorList>
    </citation>
    <scope>INTERACTION WITH POL30</scope>
</reference>
<reference key="8">
    <citation type="journal article" date="1996" name="Curr. Biol.">
        <title>Binding of insertion/deletion DNA mismatches by the heterodimer of yeast mismatch repair proteins MSH2 and MSH3.</title>
        <authorList>
            <person name="Habraken Y."/>
            <person name="Sung P."/>
            <person name="Prakash L."/>
            <person name="Prakash S."/>
        </authorList>
    </citation>
    <scope>DNA-BINDING SPECIFICITY</scope>
    <scope>INTERACTION WITH MSH3</scope>
</reference>
<reference key="9">
    <citation type="journal article" date="1996" name="Genes Dev.">
        <title>Redundancy of Saccharomyces cerevisiae MSH3 and MSH6 in MSH2-dependent mismatch repair.</title>
        <authorList>
            <person name="Marsischky G.T."/>
            <person name="Filosi N."/>
            <person name="Kane M.F."/>
            <person name="Kolodner R.D."/>
        </authorList>
    </citation>
    <scope>FUNCTION</scope>
    <scope>INTERACTION WITH MSH3 AND MSH6</scope>
</reference>
<reference key="10">
    <citation type="journal article" date="1996" name="Mol. Cell. Biol.">
        <title>The Saccharomyces cerevisiae Msh2 and Msh6 proteins form a complex that specifically binds to duplex oligonucleotides containing mismatched DNA base pairs.</title>
        <authorList>
            <person name="Alani E."/>
        </authorList>
    </citation>
    <scope>CHARACTERIZATION</scope>
    <scope>INTERACTION WITH MSH6</scope>
</reference>
<reference key="11">
    <citation type="journal article" date="1997" name="Curr. Biol.">
        <title>Enhancement of MSH2-MSH3-mediated mismatch recognition by the yeast MLH1-PMS1 complex.</title>
        <authorList>
            <person name="Habraken Y."/>
            <person name="Sung P."/>
            <person name="Prakash L."/>
            <person name="Prakash S."/>
        </authorList>
    </citation>
    <scope>FUNCTION</scope>
    <scope>DNA-BINDING SPECIFICITY</scope>
    <scope>COMPLEX FORMATION WITH MLH1-PMS1</scope>
</reference>
<reference key="12">
    <citation type="journal article" date="1997" name="Mol. Cell. Biol.">
        <title>Microsatellite instability in yeast: dependence on repeat unit size and DNA mismatch repair genes.</title>
        <authorList>
            <person name="Sia E.A."/>
            <person name="Kokoska R.J."/>
            <person name="Dominska M."/>
            <person name="Greenwell P."/>
            <person name="Petes T.D."/>
        </authorList>
    </citation>
    <scope>FUNCTION IN MMR</scope>
</reference>
<reference key="13">
    <citation type="journal article" date="1997" name="Proc. Natl. Acad. Sci. U.S.A.">
        <title>Role of Saccharomyces cerevisiae Msh2 and Msh3 repair proteins in double-strand break-induced recombination.</title>
        <authorList>
            <person name="Sugawara N."/>
            <person name="Paques F."/>
            <person name="Colaiacovo M."/>
            <person name="Haber J.E."/>
        </authorList>
    </citation>
    <scope>FUNCTION IN NHTR</scope>
</reference>
<reference key="14">
    <citation type="journal article" date="1998" name="J. Biol. Chem.">
        <title>ATP-dependent assembly of a ternary complex consisting of a DNA mismatch and the yeast MSH2-MSH6 and MLH1-PMS1 protein complexes.</title>
        <authorList>
            <person name="Habraken Y."/>
            <person name="Sung P."/>
            <person name="Prakash L."/>
            <person name="Prakash S."/>
        </authorList>
    </citation>
    <scope>FUNCTION</scope>
    <scope>DNA-BINDING</scope>
    <scope>COMPLEX FORMATION WITH MLH1-PMS1</scope>
</reference>
<reference key="15">
    <citation type="journal article" date="1998" name="Mol. Cell. Biol.">
        <title>Saccharomyces cerevisiae Msh2p and Msh6p ATPase activities are both required during mismatch repair.</title>
        <authorList>
            <person name="Studamire B."/>
            <person name="Quach T."/>
            <person name="Alani E."/>
        </authorList>
    </citation>
    <scope>MUTAGENESIS OF GLY-693</scope>
</reference>
<reference key="16">
    <citation type="journal article" date="1998" name="Proc. Natl. Acad. Sci. U.S.A.">
        <title>The Saccharomyces cerevisiae MLH3 gene functions in MSH3-dependent suppression of frameshift mutations.</title>
        <authorList>
            <person name="Flores-Rozas H."/>
            <person name="Kolodner R.D."/>
        </authorList>
    </citation>
    <scope>FUNCTION</scope>
</reference>
<reference key="17">
    <citation type="journal article" date="1999" name="Curr. Biol.">
        <title>Mutator phenotypes of common polymorphisms and missense mutations in MSH2.</title>
        <authorList>
            <person name="Drotschmann K."/>
            <person name="Clark A.B."/>
            <person name="Kunkel T.A."/>
        </authorList>
    </citation>
    <scope>MUTAGENESIS OF GLY-317; LEU-402; GLN-430; ASP-524; ARG-542; PRO-640 AND CYS-716</scope>
</reference>
<reference key="18">
    <citation type="journal article" date="1999" name="J. Biol. Chem.">
        <title>Saccharomyces cerevisiae MSH2/6 complex interacts with Holliday junctions and facilitates their cleavage by phage resolution enzymes.</title>
        <authorList>
            <person name="Marsischky G.T."/>
            <person name="Lee S."/>
            <person name="Griffith J."/>
            <person name="Kolodner R.D."/>
        </authorList>
    </citation>
    <scope>DNA-BINDING SPECIFICITY</scope>
</reference>
<reference key="19">
    <citation type="journal article" date="1999" name="J. Biol. Chem.">
        <title>Biochemical characterization of the interaction between the Saccharomyces cerevisiae MSH2-MSH6 complex and mispaired bases in DNA.</title>
        <authorList>
            <person name="Marsischky G.T."/>
            <person name="Kolodner R.D."/>
        </authorList>
    </citation>
    <scope>DNA-BINDING SPECIFICITY</scope>
</reference>
<reference key="20">
    <citation type="journal article" date="1999" name="Mol. Cell">
        <title>MSH2 and MSH6 are required for removal of adenine misincorporated opposite 8-oxo-guanine in S. cerevisiae.</title>
        <authorList>
            <person name="Ni T.T."/>
            <person name="Marsischky G.T."/>
            <person name="Kolodner R.D."/>
        </authorList>
    </citation>
    <scope>FUNCTION</scope>
</reference>
<reference key="21">
    <citation type="journal article" date="1999" name="Mol. Cell. Biol.">
        <title>Separation-of-function mutations in Saccharomyces cerevisiae MSH2 that confer mismatch repair defects but do not affect nonhomologous-tail removal during recombination.</title>
        <authorList>
            <person name="Studamire B."/>
            <person name="Price G."/>
            <person name="Sugawara N."/>
            <person name="Haber J.E."/>
            <person name="Alani E."/>
        </authorList>
    </citation>
    <scope>MUTAGENESIS</scope>
</reference>
<reference key="22">
    <citation type="journal article" date="1999" name="Proc. Natl. Acad. Sci. U.S.A.">
        <title>Mutator phenotypes of yeast strains heterozygous for mutations in the MSH2 gene.</title>
        <authorList>
            <person name="Drotschmann K."/>
            <person name="Clark A.B."/>
            <person name="Tran H.T."/>
            <person name="Resnick M.A."/>
            <person name="Gordenin D.A."/>
            <person name="Kunkel T.A."/>
        </authorList>
    </citation>
    <scope>MUTAGENESIS OF GLY-688; GLY-693; LYS-694 AND SER-695</scope>
</reference>
<reference key="23">
    <citation type="journal article" date="2000" name="J. Biol. Chem.">
        <title>Functional interaction of proliferating cell nuclear antigen with MSH2-MSH6 and MSH2-MSH3 complexes.</title>
        <authorList>
            <person name="Clark A.B."/>
            <person name="Valle F."/>
            <person name="Drotschmann K."/>
            <person name="Gary R.K."/>
            <person name="Kunkel T.A."/>
        </authorList>
    </citation>
    <scope>INTERACTION WITH POL30</scope>
</reference>
<reference key="24">
    <citation type="journal article" date="2001" name="Hum. Mol. Genet.">
        <title>Functional analysis of human MLH1 and MSH2 missense variants and hybrid human-yeast MLH1 proteins in Saccharomyces cerevisiae.</title>
        <authorList>
            <person name="Ellison A.R."/>
            <person name="Lofing J."/>
            <person name="Bitter G.A."/>
        </authorList>
    </citation>
    <scope>MUTAGENESIS OF GLY-317; PRO-640 AND HIS-658</scope>
</reference>
<reference key="25">
    <citation type="journal article" date="2001" name="J. Biol. Chem.">
        <title>Asymmetric recognition of DNA local distortion. Structure-based functional studies of eukaryotic Msh2-Msh6.</title>
        <authorList>
            <person name="Drotschmann K."/>
            <person name="Yang W."/>
            <person name="Brownewell F.E."/>
            <person name="Kool E.T."/>
            <person name="Kunkel T.A."/>
        </authorList>
    </citation>
    <scope>DNA-BINDING</scope>
    <scope>MUTAGENESIS OF TYR-42 AND LYS-65</scope>
</reference>
<reference key="26">
    <citation type="journal article" date="2001" name="J. Mol. Biol.">
        <title>MSH-MLH complexes formed at a DNA mismatch are disrupted by the PCNA sliding clamp.</title>
        <authorList>
            <person name="Bowers J."/>
            <person name="Tran P.T."/>
            <person name="Joshi A."/>
            <person name="Liskay R.M."/>
            <person name="Alani E."/>
        </authorList>
    </citation>
    <scope>FUNCTION</scope>
    <scope>COMPLEX FORMATION WITH MLH1-PMS1</scope>
</reference>
<reference key="27">
    <citation type="journal article" date="2002" name="DNA Repair">
        <title>Evidence for sequential action of two ATPase active sites in yeast Msh2-Msh6.</title>
        <authorList>
            <person name="Drotschmann K."/>
            <person name="Yang W."/>
            <person name="Kunkel T.A."/>
        </authorList>
    </citation>
    <scope>FUNCTION</scope>
    <scope>MUTAGENESIS OF GLU-768</scope>
</reference>
<reference key="28">
    <citation type="journal article" date="2003" name="Biochemistry">
        <title>Mismatch recognition-coupled stabilization of Msh2-Msh6 in an ATP-bound state at the initiation of DNA repair.</title>
        <authorList>
            <person name="Antony E."/>
            <person name="Hingorani M.M."/>
        </authorList>
    </citation>
    <scope>FUNCTION</scope>
</reference>
<reference key="29">
    <citation type="journal article" date="2003" name="J. Biol. Chem.">
        <title>Transfer of the MSH2.MSH6 complex from proliferating cell nuclear antigen to mispaired bases in DNA.</title>
        <authorList>
            <person name="Lau P.J."/>
            <person name="Kolodner R.D."/>
        </authorList>
    </citation>
    <scope>INTERACTION WITH POL30</scope>
</reference>
<reference key="30">
    <citation type="journal article" date="2003" name="J. Mol. Biol.">
        <title>Msh2 separation of function mutations confer defects in the initiation steps of mismatch repair.</title>
        <authorList>
            <person name="Kijas A.W."/>
            <person name="Studamire B."/>
            <person name="Alani E."/>
        </authorList>
    </citation>
    <scope>FUNCTION</scope>
    <scope>MUTAGENESIS OF SER-561; LYS-564; GLY-566; SER-656 AND ARG-730</scope>
</reference>
<reference key="31">
    <citation type="journal article" date="2003" name="Nature">
        <title>Global analysis of protein localization in budding yeast.</title>
        <authorList>
            <person name="Huh W.-K."/>
            <person name="Falvo J.V."/>
            <person name="Gerke L.C."/>
            <person name="Carroll A.S."/>
            <person name="Howson R.W."/>
            <person name="Weissman J.S."/>
            <person name="O'Shea E.K."/>
        </authorList>
    </citation>
    <scope>SUBCELLULAR LOCATION [LARGE SCALE ANALYSIS]</scope>
</reference>
<reference key="32">
    <citation type="journal article" date="2003" name="Nature">
        <title>Global analysis of protein expression in yeast.</title>
        <authorList>
            <person name="Ghaemmaghami S."/>
            <person name="Huh W.-K."/>
            <person name="Bower K."/>
            <person name="Howson R.W."/>
            <person name="Belle A."/>
            <person name="Dephoure N."/>
            <person name="O'Shea E.K."/>
            <person name="Weissman J.S."/>
        </authorList>
    </citation>
    <scope>LEVEL OF PROTEIN EXPRESSION [LARGE SCALE ANALYSIS]</scope>
</reference>
<reference key="33">
    <citation type="journal article" date="2004" name="J. Biol. Chem.">
        <title>Cadmium inhibits the functions of eukaryotic MutS complexes.</title>
        <authorList>
            <person name="Clark A.B."/>
            <person name="Kunkel T.A."/>
        </authorList>
    </citation>
    <scope>ACTIVITY REGULATION</scope>
    <scope>MUTAGENESIS OF GLU-768</scope>
</reference>
<reference key="34">
    <citation type="journal article" date="2005" name="J. Biol. Chem.">
        <title>Analysis of the interaction between the Saccharomyces cerevisiae MSH2-MSH6 and MLH1-PMS1 complexes with DNA using a reversible DNA end-blocking system.</title>
        <authorList>
            <person name="Mendillo M.L."/>
            <person name="Mazur D.J."/>
            <person name="Kolodner R.D."/>
        </authorList>
    </citation>
    <scope>FUNCTION</scope>
    <scope>COMPLEX FORMATION WITH MLH1-PMS1</scope>
</reference>
<reference key="35">
    <citation type="journal article" date="2005" name="Mol. Cell">
        <title>Detection of high-affinity and sliding clamp modes for MSH2-MSH6 by single-molecule unzipping force analysis.</title>
        <authorList>
            <person name="Jiang J."/>
            <person name="Bai L."/>
            <person name="Surtees J.A."/>
            <person name="Gemici Z."/>
            <person name="Wang M.D."/>
            <person name="Alani E."/>
        </authorList>
    </citation>
    <scope>FUNCTION</scope>
</reference>
<reference key="36">
    <citation type="journal article" date="2005" name="Nucleic Acids Res.">
        <title>Cadmium inhibits mismatch repair by blocking the ATPase activity of the MSH2-MSH6 complex.</title>
        <authorList>
            <person name="Banerjee S."/>
            <person name="Flores-Rozas H."/>
        </authorList>
    </citation>
    <scope>ACTIVITY REGULATION</scope>
</reference>
<reference key="37">
    <citation type="journal article" date="2006" name="DNA Repair">
        <title>Contribution of Msh2 and Msh6 subunits to the asymmetric ATPase and DNA mismatch binding activities of Saccharomyces cerevisiae Msh2-Msh6 mismatch repair protein.</title>
        <authorList>
            <person name="Antony E."/>
            <person name="Khubchandani S."/>
            <person name="Chen S."/>
            <person name="Hingorani M.M."/>
        </authorList>
    </citation>
    <scope>FUNCTION</scope>
    <scope>MUTAGENESIS OF LYS-694 AND GLU-768</scope>
</reference>
<reference key="38">
    <citation type="journal article" date="2006" name="Genetics">
        <title>Analysis of the proteins involved in the in vivo repair of base-base mismatches and four-base loops formed during meiotic recombination in the yeast Saccharomyces cerevisiae.</title>
        <authorList>
            <person name="Stone J.E."/>
            <person name="Petes T.D."/>
        </authorList>
    </citation>
    <scope>FUNCTION</scope>
</reference>
<reference key="39">
    <citation type="journal article" date="2006" name="Mol. Cell">
        <title>Inhibition of Msh6 ATPase activity by mispaired DNA induces a Msh2(ATP)-Msh6(ATP) state capable of hydrolysis-independent movement along DNA.</title>
        <authorList>
            <person name="Mazur D.J."/>
            <person name="Mendillo M.L."/>
            <person name="Kolodner R.D."/>
        </authorList>
    </citation>
    <scope>FUNCTION</scope>
    <scope>MUTAGENESIS OF LYS-694</scope>
</reference>
<reference key="40">
    <citation type="journal article" date="2006" name="J. Mol. Biol.">
        <title>Mismatch repair factor MSH2-MSH3 binds and alters the conformation of branched DNA structures predicted to form during genetic recombination.</title>
        <authorList>
            <person name="Surtees J.A."/>
            <person name="Alani E."/>
        </authorList>
    </citation>
    <scope>FUNCTION IN NHTR</scope>
    <scope>DNA-BINDING</scope>
</reference>
<reference key="41">
    <citation type="journal article" date="2007" name="J. Mol. Biol.">
        <title>Saccharomyces cerevisiae MSH2-MSH3 and MSH2-MSH6 complexes display distinct requirements for DNA binding domain I in mismatch recognition.</title>
        <authorList>
            <person name="Lee S.D."/>
            <person name="Surtees J.A."/>
            <person name="Alani E."/>
        </authorList>
    </citation>
    <scope>FUNCTION</scope>
    <scope>DNA-BINDING</scope>
</reference>
<reference key="42">
    <citation type="journal article" date="2007" name="Mol. Cell. Biol.">
        <title>Saccharomyces cerevisiae Msh2-Msh3 acts in repair of base-base mispairs.</title>
        <authorList>
            <person name="Harrington J.M."/>
            <person name="Kolodner R.D."/>
        </authorList>
    </citation>
    <scope>FUNCTION</scope>
</reference>
<reference key="43">
    <citation type="journal article" date="2008" name="Mol. Cell">
        <title>Microarray-based genetic screen defines SAW1, a gene required for Rad1/Rad10-dependent processing of recombination intermediates.</title>
        <authorList>
            <person name="Li F."/>
            <person name="Dong J."/>
            <person name="Pan X."/>
            <person name="Oum J.-H."/>
            <person name="Boeke J.D."/>
            <person name="Lee S.E."/>
        </authorList>
    </citation>
    <scope>INTERACTION WITH SAW1</scope>
</reference>
<accession>P25847</accession>
<accession>D6W1X8</accession>
<accession>Q12423</accession>
<comment type="function">
    <text evidence="4 7 11 12 13 18 19 20 21 22 23 24 25 27 31 32 33 34 35">Component of the post-replicative DNA mismatch repair system (MMR). Forms two different heterodimers: MutS alpha (MSH2-MSH6 heterodimer) and MutS beta (MSH2-MSH3 heterodimer), which bind to DNA mismatches thereby initiating DNA repair. MSH2 seems to act as a scaffold for the other MutS homologs that provide substrate-binding and substrate specificity. When bound, heterodimers bend the DNA helix and shield approximately 20 base pairs. MutS alpha acts mainly to repair base-base and single insertion-deletion mismatches that occur during replication, but can also repair longer insertion-deletion loops (IDLs), although with decreasing efficiency as the size of the extrahelical loop increases. MutS beta acts mainly to repair IDLs from 2 to 13 nucleotides in size, but can also repair base-base and single insertion-deletion mismatches. After mismatch binding, MutS alpha or beta form a ternary complex with a MutL heterodimer, which is thought to be responsible for directing the downstream MMR events, including strand discrimination, excision, and resynthesis. ATP binding and hydrolysis play a pivotal role in mismatch repair functions. Both subunits bind ATP, but with differing affinities, and their ATPase kinetics are also very different. MSH6 binds and hydrolyzes ATP rapidly, whereas MSH2 catalyzes ATP at a substantially slower rate. Binding to a mismatched base pair suppresses MSH6-catalyzed ATP hydrolysis, but not the activity of MSH2. ATP binding to both subunits is necessary to trigger a change in MutS alpha interaction with mismatched DNA, converting MutS alpha into a sliding clamp capable of hydrolysis-independent movement along DNA, and also facilitates formation of ternary complexes containing MutS and MutL proteins and the mismatch. MutS beta also has a role in regulation of heteroduplex formation during mitotic and meiotic recombination. MutS beta binds to DNA flap structures predicted to form during recombination, and is required for 3' non-homologous tail removal (NHTR). MutS beta-binding alters the DNA conformation of its substrate at the ds/ssDNA junction and may facilitate its recognition and/or cleavage by the downstream nucleotide excision repair (NER) RAD1-RAD10 endonuclease.</text>
</comment>
<comment type="activity regulation">
    <text evidence="16 17">Inhibited by Cd(2+).</text>
</comment>
<comment type="subunit">
    <text evidence="6 10 26 27 28 29 30">Heterodimer consisting of MSH2-MSH6 (MutS alpha) or MSH2-MSH3 (MutS beta). Both heterodimers form a ternary complex with MutL alpha (MLH1-PMS1). MutS beta also forms a ternary complex with MutL beta (MLH1-MLH3), and possibly with a MLH1-MLH2 heterodimer. Both heterodimers interact with proliferating cell nuclear antigen (PCNA/POL30). This interaction is disrupted upon binding of the MutS heterodimers to mismatch DNA. Interacts with SAW1.</text>
</comment>
<comment type="interaction">
    <interactant intactId="EBI-11352">
        <id>P25847</id>
    </interactant>
    <interactant intactId="EBI-6738">
        <id>P39875</id>
        <label>EXO1</label>
    </interactant>
    <organismsDiffer>false</organismsDiffer>
    <experiments>3</experiments>
</comment>
<comment type="interaction">
    <interactant intactId="EBI-11352">
        <id>P25847</id>
    </interactant>
    <interactant intactId="EBI-11362">
        <id>P25336</id>
        <label>MSH3</label>
    </interactant>
    <organismsDiffer>false</organismsDiffer>
    <experiments>4</experiments>
</comment>
<comment type="interaction">
    <interactant intactId="EBI-11352">
        <id>P25847</id>
    </interactant>
    <interactant intactId="EBI-11383">
        <id>Q03834</id>
        <label>MSH6</label>
    </interactant>
    <organismsDiffer>false</organismsDiffer>
    <experiments>7</experiments>
</comment>
<comment type="subcellular location">
    <subcellularLocation>
        <location evidence="14">Nucleus</location>
    </subcellularLocation>
</comment>
<comment type="miscellaneous">
    <text evidence="15">Present with 1230 molecules/cell in log phase SD medium.</text>
</comment>
<comment type="similarity">
    <text evidence="37">Belongs to the DNA mismatch repair MutS family.</text>
</comment>
<proteinExistence type="evidence at protein level"/>
<organism>
    <name type="scientific">Saccharomyces cerevisiae (strain ATCC 204508 / S288c)</name>
    <name type="common">Baker's yeast</name>
    <dbReference type="NCBI Taxonomy" id="559292"/>
    <lineage>
        <taxon>Eukaryota</taxon>
        <taxon>Fungi</taxon>
        <taxon>Dikarya</taxon>
        <taxon>Ascomycota</taxon>
        <taxon>Saccharomycotina</taxon>
        <taxon>Saccharomycetes</taxon>
        <taxon>Saccharomycetales</taxon>
        <taxon>Saccharomycetaceae</taxon>
        <taxon>Saccharomyces</taxon>
    </lineage>
</organism>
<name>MSH2_YEAST</name>
<protein>
    <recommendedName>
        <fullName>DNA mismatch repair protein MSH2</fullName>
    </recommendedName>
    <alternativeName>
        <fullName>MutS protein homolog 2</fullName>
    </alternativeName>
</protein>
<sequence>MSSTRPELKFSDVSEERNFYKKYTGLPKKPLKTIRLVDKGDYYTVIGSDAIFVADSVYHTQSVLKNCQLDPVTAKNFHEPTKYVTVSLQVLATLLKLCLLDLGYKVEIYDKGWKLIKSASPGNIEQVNELMNMNIDSSIIIASLKVQWNSQDGNCIIGVAFIDTTAYKVGMLDIVDNEVYSNLESFLIQLGVKECLVQDLTSNSNSNAEMQKVINVIDRCGCVVTLLKNSEFSEKDVELDLTKLLGDDLALSLPQKYSKLSMGACNALIGYLQLLSEQDQVGKYELVEHKLKEFMKLDASAIKALNLFPQGPQNPFGSNNLAVSGFTSAGNSGKVTSLFQLLNHCKTNAGVRLLNEWLKQPLTNIDEINKRHDLVDYLIDQIELRQMLTSEYLPMIPDIRRLTKKLNKRGNLEDVLKIYQFSKRIPEIVQVFTSFLEDDSPTEPVNELVRSVWLAPLSHHVEPLSKFEEMVETTVDLDAYEENNEFMIKVEFNEELGKIRSKLDTLRDEIHSIHLDSAEDLGFDPDKKLKLENHHLHGWCMRLTRNDAKELRKHKKYIELSTVKAGIFFSTKQLKSIANETNILQKEYDKQQSALVREIINITLTYTPVFEKLSLVLAHLDVIASFAHTSSYAPIPYIRPKLHPMDSERRTHLISSRHPVLEMQDDISFISNDVTLESGKGDFLIITGPNMGGKSTYIRQVGVISLMAQIGCFVPCEEAEIAIVDAILCRVGAGDSQLKGVSTFMVEILETASILKNASKNSLIIVDELGRGTSTYDGFGLAWAIAEHIASKIGCFALFATHFHELTELSEKLPNVKNMHVVAHIEKNLKEQKHDDEDITLLYKVEPGISDQSFGIHVAEVVQFPEKIVKMAKRKANELDDLKTNNEDLKKAKLSLQEVNEGNIRLKALLKEWIRKVKEEGLHDPSKITEEASQHKIQELLRAIANEPEKENDNYLKYIKALLL</sequence>
<feature type="chain" id="PRO_0000115191" description="DNA mismatch repair protein MSH2">
    <location>
        <begin position="1"/>
        <end position="964"/>
    </location>
</feature>
<feature type="region of interest" description="Interaction with MSH6">
    <location>
        <begin position="851"/>
        <end position="964"/>
    </location>
</feature>
<feature type="binding site" evidence="1">
    <location>
        <begin position="688"/>
        <end position="695"/>
    </location>
    <ligand>
        <name>ATP</name>
        <dbReference type="ChEBI" id="CHEBI:30616"/>
    </ligand>
</feature>
<feature type="mutagenesis site" description="Moderately reduced activity in a mismatch repair assay." evidence="9">
    <original>Y</original>
    <variation>A</variation>
    <location>
        <position position="42"/>
    </location>
</feature>
<feature type="mutagenesis site" description="Defective in a mismatch repair assay." evidence="9">
    <original>K</original>
    <variation>A</variation>
    <location>
        <position position="65"/>
    </location>
</feature>
<feature type="mutagenesis site" description="Partially defective in a mismatch repair assay." evidence="3 8">
    <original>G</original>
    <variation>D</variation>
    <location>
        <position position="317"/>
    </location>
</feature>
<feature type="mutagenesis site" description="Partially defective in a mismatch repair assay." evidence="3">
    <original>L</original>
    <variation>F</variation>
    <location>
        <position position="402"/>
    </location>
</feature>
<feature type="mutagenesis site" description="Partially defective in a mismatch repair assay." evidence="3">
    <original>Q</original>
    <variation>K</variation>
    <location>
        <position position="430"/>
    </location>
</feature>
<feature type="mutagenesis site" description="Defective in MMR, but not in NHTR." evidence="5">
    <original>A</original>
    <variation>P</variation>
    <location>
        <position position="518"/>
    </location>
</feature>
<feature type="mutagenesis site" description="Partially defective in a mismatch repair assay." evidence="3">
    <original>D</original>
    <variation>Y</variation>
    <location>
        <position position="524"/>
    </location>
</feature>
<feature type="mutagenesis site" description="Defective in a mismatch repair assay." evidence="3">
    <original>R</original>
    <variation>P</variation>
    <location>
        <position position="542"/>
    </location>
</feature>
<feature type="mutagenesis site" description="Causes strong defects in MutS alpha mismatch binding. Defective in MMR, but not in NHTR." evidence="13">
    <original>S</original>
    <variation>P</variation>
    <location>
        <position position="561"/>
    </location>
</feature>
<feature type="mutagenesis site" description="Causes strong defects in MutS alpha mismatch binding. Defective in MMR, but not in NHTR." evidence="13">
    <original>K</original>
    <variation>E</variation>
    <location>
        <position position="564"/>
    </location>
</feature>
<feature type="mutagenesis site" description="Defective in MMR, but not in NHTR." evidence="13">
    <original>G</original>
    <variation>D</variation>
    <location>
        <position position="566"/>
    </location>
</feature>
<feature type="mutagenesis site" description="Defective in MMR and in NHTR." evidence="5">
    <original>L</original>
    <variation>S</variation>
    <location>
        <position position="574"/>
    </location>
</feature>
<feature type="mutagenesis site" description="Defective in MMR and in NHTR." evidence="5">
    <original>L</original>
    <variation>P</variation>
    <location>
        <position position="584"/>
    </location>
</feature>
<feature type="mutagenesis site" description="Defective in a mismatch repair assay." evidence="3 8">
    <original>P</original>
    <variation>L</variation>
    <location>
        <position position="640"/>
    </location>
</feature>
<feature type="mutagenesis site" description="Causes defects in ATP-dependent dissociation of MutS alpha from mismatch DNA and in interactions between MutS alpha and MutL alpha. Defective in MMR, but not in NHTR." evidence="13">
    <original>S</original>
    <variation>P</variation>
    <location>
        <position position="656"/>
    </location>
</feature>
<feature type="mutagenesis site" description="Fully functional in a mismatch repair assay." evidence="8">
    <original>H</original>
    <variation>Y</variation>
    <location>
        <position position="658"/>
    </location>
</feature>
<feature type="mutagenesis site" description="Moderately reduced activity in a mismatch repair assay." evidence="2">
    <original>G</original>
    <variation>A</variation>
    <location>
        <position position="688"/>
    </location>
</feature>
<feature type="mutagenesis site" description="Has a dominant negative mutator effect." evidence="2 36">
    <original>G</original>
    <variation>A</variation>
    <variation>S</variation>
    <location>
        <position position="693"/>
    </location>
</feature>
<feature type="mutagenesis site" description="Has no defect in mismatch DNA binding, but lacks ATP-induced conformational change. Defective in MMR and in NHTR." evidence="2 36">
    <original>G</original>
    <variation>D</variation>
    <location>
        <position position="693"/>
    </location>
</feature>
<feature type="mutagenesis site" description="Impairs ATP binding; reduces catalytic activity 1.6-fold for ATP hydrolysis. Has a dominant negative mutator effect." evidence="2 19 21">
    <original>K</original>
    <variation>A</variation>
    <location>
        <position position="694"/>
    </location>
</feature>
<feature type="mutagenesis site" description="Defective in MMR and in NHTR." evidence="2 19 21">
    <original>K</original>
    <variation>R</variation>
    <location>
        <position position="694"/>
    </location>
</feature>
<feature type="mutagenesis site" description="Has a dominant negative mutator effect." evidence="2">
    <original>S</original>
    <variation>A</variation>
    <location>
        <position position="695"/>
    </location>
</feature>
<feature type="mutagenesis site" description="Defective in a mismatch repair assay." evidence="3">
    <original>C</original>
    <variation>F</variation>
    <location>
        <position position="716"/>
    </location>
</feature>
<feature type="mutagenesis site" description="Disrupts MutS alpha ATPase activity, but does not affect ATP binding or interactions with MutL alpha. Defective in MMR, but not in NHTR." evidence="13">
    <original>R</original>
    <variation>W</variation>
    <location>
        <position position="730"/>
    </location>
</feature>
<feature type="mutagenesis site" description="Defective in MMR, but not in NHTR." evidence="5">
    <original>S</original>
    <variation>F</variation>
    <location>
        <position position="742"/>
    </location>
</feature>
<feature type="mutagenesis site" description="Defective in MMR and in NHTR." evidence="5">
    <original>S</original>
    <variation>P</variation>
    <location>
        <position position="742"/>
    </location>
</feature>
<feature type="mutagenesis site" description="Reduces catalytic activity 50-fold for ATP hydrolysis." evidence="11 16 19">
    <original>E</original>
    <variation>A</variation>
    <location>
        <position position="768"/>
    </location>
</feature>
<feature type="mutagenesis site" description="Defective in MMR and in NHTR." evidence="5">
    <original>T</original>
    <variation>I</variation>
    <location>
        <position position="773"/>
    </location>
</feature>
<feature type="mutagenesis site" description="Defective in MMR, but not in NHTR." evidence="5">
    <original>G</original>
    <variation>D</variation>
    <location>
        <position position="855"/>
    </location>
</feature>
<feature type="mutagenesis site" description="Defective in MMR, but not in NHTR." evidence="5">
    <original>A</original>
    <variation>E</variation>
    <location>
        <position position="859"/>
    </location>
</feature>
<feature type="mutagenesis site" description="Defective in MMR, but not in NHTR." evidence="5">
    <original>V</original>
    <variation>D</variation>
    <location>
        <position position="862"/>
    </location>
</feature>
<feature type="mutagenesis site" description="Defective in MMR and in NHTR." evidence="5">
    <location>
        <begin position="863"/>
        <end position="868"/>
    </location>
</feature>
<feature type="sequence conflict" description="In Ref. 1; AAA34802." evidence="37" ref="1">
    <original>KYIKALLL</original>
    <variation>EIYKSPCCYN</variation>
    <location>
        <begin position="957"/>
        <end position="964"/>
    </location>
</feature>
<dbReference type="EMBL" id="M84170">
    <property type="protein sequence ID" value="AAA34802.1"/>
    <property type="molecule type" value="Genomic_DNA"/>
</dbReference>
<dbReference type="EMBL" id="X83121">
    <property type="protein sequence ID" value="CAA58189.1"/>
    <property type="molecule type" value="Genomic_DNA"/>
</dbReference>
<dbReference type="EMBL" id="Z74832">
    <property type="protein sequence ID" value="CAA99102.1"/>
    <property type="molecule type" value="Genomic_DNA"/>
</dbReference>
<dbReference type="EMBL" id="BK006948">
    <property type="protein sequence ID" value="DAA10694.1"/>
    <property type="molecule type" value="Genomic_DNA"/>
</dbReference>
<dbReference type="PIR" id="S57379">
    <property type="entry name" value="S57379"/>
</dbReference>
<dbReference type="RefSeq" id="NP_014551.1">
    <property type="nucleotide sequence ID" value="NM_001183344.1"/>
</dbReference>
<dbReference type="SMR" id="P25847"/>
<dbReference type="BioGRID" id="34312">
    <property type="interactions" value="351"/>
</dbReference>
<dbReference type="ComplexPortal" id="CPX-1036">
    <property type="entry name" value="DNA mismatch repair MutSbeta complex"/>
</dbReference>
<dbReference type="ComplexPortal" id="CPX-1037">
    <property type="entry name" value="DNA mismatch repair MutSalpha complex"/>
</dbReference>
<dbReference type="DIP" id="DIP-2415N"/>
<dbReference type="FunCoup" id="P25847">
    <property type="interactions" value="1367"/>
</dbReference>
<dbReference type="IntAct" id="P25847">
    <property type="interactions" value="39"/>
</dbReference>
<dbReference type="MINT" id="P25847"/>
<dbReference type="STRING" id="4932.YOL090W"/>
<dbReference type="iPTMnet" id="P25847"/>
<dbReference type="PaxDb" id="4932-YOL090W"/>
<dbReference type="PeptideAtlas" id="P25847"/>
<dbReference type="EnsemblFungi" id="YOL090W_mRNA">
    <property type="protein sequence ID" value="YOL090W"/>
    <property type="gene ID" value="YOL090W"/>
</dbReference>
<dbReference type="GeneID" id="854063"/>
<dbReference type="KEGG" id="sce:YOL090W"/>
<dbReference type="AGR" id="SGD:S000005450"/>
<dbReference type="SGD" id="S000005450">
    <property type="gene designation" value="MSH2"/>
</dbReference>
<dbReference type="VEuPathDB" id="FungiDB:YOL090W"/>
<dbReference type="eggNOG" id="KOG0219">
    <property type="taxonomic scope" value="Eukaryota"/>
</dbReference>
<dbReference type="GeneTree" id="ENSGT00550000074867"/>
<dbReference type="HOGENOM" id="CLU_002472_10_0_1"/>
<dbReference type="InParanoid" id="P25847"/>
<dbReference type="OMA" id="LVRFPQK"/>
<dbReference type="OrthoDB" id="295033at2759"/>
<dbReference type="BioCyc" id="YEAST:G3O-33490-MONOMER"/>
<dbReference type="Reactome" id="R-SCE-5358565">
    <property type="pathway name" value="Mismatch repair (MMR) directed by MSH2:MSH6 (MutSalpha)"/>
</dbReference>
<dbReference type="Reactome" id="R-SCE-5358606">
    <property type="pathway name" value="Mismatch repair (MMR) directed by MSH2:MSH3 (MutSbeta)"/>
</dbReference>
<dbReference type="BioGRID-ORCS" id="854063">
    <property type="hits" value="9 hits in 10 CRISPR screens"/>
</dbReference>
<dbReference type="PRO" id="PR:P25847"/>
<dbReference type="Proteomes" id="UP000002311">
    <property type="component" value="Chromosome XV"/>
</dbReference>
<dbReference type="RNAct" id="P25847">
    <property type="molecule type" value="protein"/>
</dbReference>
<dbReference type="GO" id="GO:0032301">
    <property type="term" value="C:MutSalpha complex"/>
    <property type="evidence" value="ECO:0000353"/>
    <property type="project" value="ComplexPortal"/>
</dbReference>
<dbReference type="GO" id="GO:0032302">
    <property type="term" value="C:MutSbeta complex"/>
    <property type="evidence" value="ECO:0000353"/>
    <property type="project" value="ComplexPortal"/>
</dbReference>
<dbReference type="GO" id="GO:0000228">
    <property type="term" value="C:nuclear chromosome"/>
    <property type="evidence" value="ECO:0000314"/>
    <property type="project" value="SGD"/>
</dbReference>
<dbReference type="GO" id="GO:0005634">
    <property type="term" value="C:nucleus"/>
    <property type="evidence" value="ECO:0007005"/>
    <property type="project" value="SGD"/>
</dbReference>
<dbReference type="GO" id="GO:0005524">
    <property type="term" value="F:ATP binding"/>
    <property type="evidence" value="ECO:0000314"/>
    <property type="project" value="SGD"/>
</dbReference>
<dbReference type="GO" id="GO:0016887">
    <property type="term" value="F:ATP hydrolysis activity"/>
    <property type="evidence" value="ECO:0000314"/>
    <property type="project" value="SGD"/>
</dbReference>
<dbReference type="GO" id="GO:0140664">
    <property type="term" value="F:ATP-dependent DNA damage sensor activity"/>
    <property type="evidence" value="ECO:0007669"/>
    <property type="project" value="InterPro"/>
</dbReference>
<dbReference type="GO" id="GO:0000406">
    <property type="term" value="F:double-strand/single-strand DNA junction binding"/>
    <property type="evidence" value="ECO:0000314"/>
    <property type="project" value="SGD"/>
</dbReference>
<dbReference type="GO" id="GO:0000400">
    <property type="term" value="F:four-way junction DNA binding"/>
    <property type="evidence" value="ECO:0000314"/>
    <property type="project" value="SGD"/>
</dbReference>
<dbReference type="GO" id="GO:0030983">
    <property type="term" value="F:mismatched DNA binding"/>
    <property type="evidence" value="ECO:0000318"/>
    <property type="project" value="GO_Central"/>
</dbReference>
<dbReference type="GO" id="GO:0006310">
    <property type="term" value="P:DNA recombination"/>
    <property type="evidence" value="ECO:0000315"/>
    <property type="project" value="SGD"/>
</dbReference>
<dbReference type="GO" id="GO:0036297">
    <property type="term" value="P:interstrand cross-link repair"/>
    <property type="evidence" value="ECO:0000316"/>
    <property type="project" value="SGD"/>
</dbReference>
<dbReference type="GO" id="GO:0006311">
    <property type="term" value="P:meiotic gene conversion"/>
    <property type="evidence" value="ECO:0000315"/>
    <property type="project" value="SGD"/>
</dbReference>
<dbReference type="GO" id="GO:0000710">
    <property type="term" value="P:meiotic mismatch repair"/>
    <property type="evidence" value="ECO:0000315"/>
    <property type="project" value="SGD"/>
</dbReference>
<dbReference type="GO" id="GO:0006298">
    <property type="term" value="P:mismatch repair"/>
    <property type="evidence" value="ECO:0000314"/>
    <property type="project" value="ComplexPortal"/>
</dbReference>
<dbReference type="GO" id="GO:0006312">
    <property type="term" value="P:mitotic recombination"/>
    <property type="evidence" value="ECO:0000315"/>
    <property type="project" value="SGD"/>
</dbReference>
<dbReference type="GO" id="GO:0000735">
    <property type="term" value="P:removal of nonhomologous ends"/>
    <property type="evidence" value="ECO:0000315"/>
    <property type="project" value="SGD"/>
</dbReference>
<dbReference type="GO" id="GO:0043111">
    <property type="term" value="P:replication fork arrest"/>
    <property type="evidence" value="ECO:0000315"/>
    <property type="project" value="SGD"/>
</dbReference>
<dbReference type="GO" id="GO:0030466">
    <property type="term" value="P:silent mating-type cassette heterochromatin formation"/>
    <property type="evidence" value="ECO:0000316"/>
    <property type="project" value="SGD"/>
</dbReference>
<dbReference type="CDD" id="cd03285">
    <property type="entry name" value="ABC_MSH2_euk"/>
    <property type="match status" value="1"/>
</dbReference>
<dbReference type="FunFam" id="3.30.420.110:FF:000002">
    <property type="entry name" value="DNA mismatch repair protein"/>
    <property type="match status" value="1"/>
</dbReference>
<dbReference type="FunFam" id="3.40.50.300:FF:000925">
    <property type="entry name" value="DNA mismatch repair protein MSH2"/>
    <property type="match status" value="1"/>
</dbReference>
<dbReference type="FunFam" id="1.10.1420.10:FF:000015">
    <property type="entry name" value="DNA mismatch repair protein Msh2"/>
    <property type="match status" value="1"/>
</dbReference>
<dbReference type="FunFam" id="3.40.1170.10:FF:000009">
    <property type="entry name" value="Mismatch repair ATPase"/>
    <property type="match status" value="1"/>
</dbReference>
<dbReference type="FunFam" id="1.10.1420.10:FF:000041">
    <property type="entry name" value="Msh2p"/>
    <property type="match status" value="1"/>
</dbReference>
<dbReference type="Gene3D" id="1.10.1420.10">
    <property type="match status" value="2"/>
</dbReference>
<dbReference type="Gene3D" id="3.40.1170.10">
    <property type="entry name" value="DNA repair protein MutS, domain I"/>
    <property type="match status" value="1"/>
</dbReference>
<dbReference type="Gene3D" id="3.30.420.110">
    <property type="entry name" value="MutS, connector domain"/>
    <property type="match status" value="1"/>
</dbReference>
<dbReference type="Gene3D" id="3.40.50.300">
    <property type="entry name" value="P-loop containing nucleotide triphosphate hydrolases"/>
    <property type="match status" value="1"/>
</dbReference>
<dbReference type="InterPro" id="IPR011184">
    <property type="entry name" value="DNA_mismatch_repair_Msh2"/>
</dbReference>
<dbReference type="InterPro" id="IPR007695">
    <property type="entry name" value="DNA_mismatch_repair_MutS-lik_N"/>
</dbReference>
<dbReference type="InterPro" id="IPR000432">
    <property type="entry name" value="DNA_mismatch_repair_MutS_C"/>
</dbReference>
<dbReference type="InterPro" id="IPR007861">
    <property type="entry name" value="DNA_mismatch_repair_MutS_clamp"/>
</dbReference>
<dbReference type="InterPro" id="IPR007696">
    <property type="entry name" value="DNA_mismatch_repair_MutS_core"/>
</dbReference>
<dbReference type="InterPro" id="IPR016151">
    <property type="entry name" value="DNA_mismatch_repair_MutS_N"/>
</dbReference>
<dbReference type="InterPro" id="IPR036187">
    <property type="entry name" value="DNA_mismatch_repair_MutS_sf"/>
</dbReference>
<dbReference type="InterPro" id="IPR007860">
    <property type="entry name" value="DNA_mmatch_repair_MutS_con_dom"/>
</dbReference>
<dbReference type="InterPro" id="IPR032642">
    <property type="entry name" value="Msh2_ATP-bd"/>
</dbReference>
<dbReference type="InterPro" id="IPR045076">
    <property type="entry name" value="MutS"/>
</dbReference>
<dbReference type="InterPro" id="IPR036678">
    <property type="entry name" value="MutS_con_dom_sf"/>
</dbReference>
<dbReference type="InterPro" id="IPR027417">
    <property type="entry name" value="P-loop_NTPase"/>
</dbReference>
<dbReference type="PANTHER" id="PTHR11361:SF35">
    <property type="entry name" value="DNA MISMATCH REPAIR PROTEIN MSH2"/>
    <property type="match status" value="1"/>
</dbReference>
<dbReference type="PANTHER" id="PTHR11361">
    <property type="entry name" value="DNA MISMATCH REPAIR PROTEIN MUTS FAMILY MEMBER"/>
    <property type="match status" value="1"/>
</dbReference>
<dbReference type="Pfam" id="PF01624">
    <property type="entry name" value="MutS_I"/>
    <property type="match status" value="1"/>
</dbReference>
<dbReference type="Pfam" id="PF05188">
    <property type="entry name" value="MutS_II"/>
    <property type="match status" value="1"/>
</dbReference>
<dbReference type="Pfam" id="PF05192">
    <property type="entry name" value="MutS_III"/>
    <property type="match status" value="1"/>
</dbReference>
<dbReference type="Pfam" id="PF05190">
    <property type="entry name" value="MutS_IV"/>
    <property type="match status" value="1"/>
</dbReference>
<dbReference type="Pfam" id="PF00488">
    <property type="entry name" value="MutS_V"/>
    <property type="match status" value="1"/>
</dbReference>
<dbReference type="PIRSF" id="PIRSF005813">
    <property type="entry name" value="MSH2"/>
    <property type="match status" value="1"/>
</dbReference>
<dbReference type="SMART" id="SM00534">
    <property type="entry name" value="MUTSac"/>
    <property type="match status" value="1"/>
</dbReference>
<dbReference type="SMART" id="SM00533">
    <property type="entry name" value="MUTSd"/>
    <property type="match status" value="1"/>
</dbReference>
<dbReference type="SUPFAM" id="SSF48334">
    <property type="entry name" value="DNA repair protein MutS, domain III"/>
    <property type="match status" value="1"/>
</dbReference>
<dbReference type="SUPFAM" id="SSF52540">
    <property type="entry name" value="P-loop containing nucleoside triphosphate hydrolases"/>
    <property type="match status" value="1"/>
</dbReference>
<dbReference type="PROSITE" id="PS00486">
    <property type="entry name" value="DNA_MISMATCH_REPAIR_2"/>
    <property type="match status" value="1"/>
</dbReference>